<gene>
    <name evidence="1" type="primary">queC</name>
    <name type="ordered locus">Sde_2525</name>
</gene>
<evidence type="ECO:0000255" key="1">
    <source>
        <dbReference type="HAMAP-Rule" id="MF_01633"/>
    </source>
</evidence>
<organism>
    <name type="scientific">Saccharophagus degradans (strain 2-40 / ATCC 43961 / DSM 17024)</name>
    <dbReference type="NCBI Taxonomy" id="203122"/>
    <lineage>
        <taxon>Bacteria</taxon>
        <taxon>Pseudomonadati</taxon>
        <taxon>Pseudomonadota</taxon>
        <taxon>Gammaproteobacteria</taxon>
        <taxon>Cellvibrionales</taxon>
        <taxon>Cellvibrionaceae</taxon>
        <taxon>Saccharophagus</taxon>
    </lineage>
</organism>
<reference key="1">
    <citation type="journal article" date="2008" name="PLoS Genet.">
        <title>Complete genome sequence of the complex carbohydrate-degrading marine bacterium, Saccharophagus degradans strain 2-40 T.</title>
        <authorList>
            <person name="Weiner R.M."/>
            <person name="Taylor L.E. II"/>
            <person name="Henrissat B."/>
            <person name="Hauser L."/>
            <person name="Land M."/>
            <person name="Coutinho P.M."/>
            <person name="Rancurel C."/>
            <person name="Saunders E.H."/>
            <person name="Longmire A.G."/>
            <person name="Zhang H."/>
            <person name="Bayer E.A."/>
            <person name="Gilbert H.J."/>
            <person name="Larimer F."/>
            <person name="Zhulin I.B."/>
            <person name="Ekborg N.A."/>
            <person name="Lamed R."/>
            <person name="Richardson P.M."/>
            <person name="Borovok I."/>
            <person name="Hutcheson S."/>
        </authorList>
    </citation>
    <scope>NUCLEOTIDE SEQUENCE [LARGE SCALE GENOMIC DNA]</scope>
    <source>
        <strain>2-40 / ATCC 43961 / DSM 17024</strain>
    </source>
</reference>
<keyword id="KW-0067">ATP-binding</keyword>
<keyword id="KW-0436">Ligase</keyword>
<keyword id="KW-0479">Metal-binding</keyword>
<keyword id="KW-0547">Nucleotide-binding</keyword>
<keyword id="KW-0671">Queuosine biosynthesis</keyword>
<keyword id="KW-1185">Reference proteome</keyword>
<keyword id="KW-0862">Zinc</keyword>
<feature type="chain" id="PRO_0000246916" description="7-cyano-7-deazaguanine synthase">
    <location>
        <begin position="1"/>
        <end position="225"/>
    </location>
</feature>
<feature type="binding site" evidence="1">
    <location>
        <begin position="10"/>
        <end position="20"/>
    </location>
    <ligand>
        <name>ATP</name>
        <dbReference type="ChEBI" id="CHEBI:30616"/>
    </ligand>
</feature>
<feature type="binding site" evidence="1">
    <location>
        <position position="189"/>
    </location>
    <ligand>
        <name>Zn(2+)</name>
        <dbReference type="ChEBI" id="CHEBI:29105"/>
    </ligand>
</feature>
<feature type="binding site" evidence="1">
    <location>
        <position position="199"/>
    </location>
    <ligand>
        <name>Zn(2+)</name>
        <dbReference type="ChEBI" id="CHEBI:29105"/>
    </ligand>
</feature>
<feature type="binding site" evidence="1">
    <location>
        <position position="202"/>
    </location>
    <ligand>
        <name>Zn(2+)</name>
        <dbReference type="ChEBI" id="CHEBI:29105"/>
    </ligand>
</feature>
<feature type="binding site" evidence="1">
    <location>
        <position position="205"/>
    </location>
    <ligand>
        <name>Zn(2+)</name>
        <dbReference type="ChEBI" id="CHEBI:29105"/>
    </ligand>
</feature>
<sequence>MSNKKAVILVSGGLDSTTALAIAQSEGYECYTLSFDYGQRHRVELEAAQRVSDKMHVAQHKVVQLDLKSIGGSALTDDDIAVPEDGPEGIPVTYVPARNTVFLSIALGWAEVLNAEAIFIGVNAVDYSGYPDCRPEYIAAFQKLAMLATKVGVEGKPLQIKTPLIDMTKAEIVQLGMRLGVDYSATVSCYQANVDGEACGRCDSCRLRRKGFEDAQMEDPTRYAN</sequence>
<comment type="function">
    <text evidence="1">Catalyzes the ATP-dependent conversion of 7-carboxy-7-deazaguanine (CDG) to 7-cyano-7-deazaguanine (preQ(0)).</text>
</comment>
<comment type="catalytic activity">
    <reaction evidence="1">
        <text>7-carboxy-7-deazaguanine + NH4(+) + ATP = 7-cyano-7-deazaguanine + ADP + phosphate + H2O + H(+)</text>
        <dbReference type="Rhea" id="RHEA:27982"/>
        <dbReference type="ChEBI" id="CHEBI:15377"/>
        <dbReference type="ChEBI" id="CHEBI:15378"/>
        <dbReference type="ChEBI" id="CHEBI:28938"/>
        <dbReference type="ChEBI" id="CHEBI:30616"/>
        <dbReference type="ChEBI" id="CHEBI:43474"/>
        <dbReference type="ChEBI" id="CHEBI:45075"/>
        <dbReference type="ChEBI" id="CHEBI:61036"/>
        <dbReference type="ChEBI" id="CHEBI:456216"/>
        <dbReference type="EC" id="6.3.4.20"/>
    </reaction>
</comment>
<comment type="cofactor">
    <cofactor evidence="1">
        <name>Zn(2+)</name>
        <dbReference type="ChEBI" id="CHEBI:29105"/>
    </cofactor>
    <text evidence="1">Binds 1 zinc ion per subunit.</text>
</comment>
<comment type="pathway">
    <text evidence="1">Purine metabolism; 7-cyano-7-deazaguanine biosynthesis.</text>
</comment>
<comment type="similarity">
    <text evidence="1">Belongs to the QueC family.</text>
</comment>
<name>QUEC_SACD2</name>
<dbReference type="EC" id="6.3.4.20" evidence="1"/>
<dbReference type="EMBL" id="CP000282">
    <property type="protein sequence ID" value="ABD81785.1"/>
    <property type="molecule type" value="Genomic_DNA"/>
</dbReference>
<dbReference type="RefSeq" id="WP_011469002.1">
    <property type="nucleotide sequence ID" value="NC_007912.1"/>
</dbReference>
<dbReference type="SMR" id="Q21HP4"/>
<dbReference type="STRING" id="203122.Sde_2525"/>
<dbReference type="GeneID" id="98614185"/>
<dbReference type="KEGG" id="sde:Sde_2525"/>
<dbReference type="eggNOG" id="COG0603">
    <property type="taxonomic scope" value="Bacteria"/>
</dbReference>
<dbReference type="HOGENOM" id="CLU_081854_1_0_6"/>
<dbReference type="OrthoDB" id="9789567at2"/>
<dbReference type="UniPathway" id="UPA00391"/>
<dbReference type="Proteomes" id="UP000001947">
    <property type="component" value="Chromosome"/>
</dbReference>
<dbReference type="GO" id="GO:0005524">
    <property type="term" value="F:ATP binding"/>
    <property type="evidence" value="ECO:0007669"/>
    <property type="project" value="UniProtKB-UniRule"/>
</dbReference>
<dbReference type="GO" id="GO:0016879">
    <property type="term" value="F:ligase activity, forming carbon-nitrogen bonds"/>
    <property type="evidence" value="ECO:0007669"/>
    <property type="project" value="UniProtKB-UniRule"/>
</dbReference>
<dbReference type="GO" id="GO:0008270">
    <property type="term" value="F:zinc ion binding"/>
    <property type="evidence" value="ECO:0007669"/>
    <property type="project" value="UniProtKB-UniRule"/>
</dbReference>
<dbReference type="GO" id="GO:0008616">
    <property type="term" value="P:queuosine biosynthetic process"/>
    <property type="evidence" value="ECO:0007669"/>
    <property type="project" value="UniProtKB-UniRule"/>
</dbReference>
<dbReference type="CDD" id="cd01995">
    <property type="entry name" value="QueC-like"/>
    <property type="match status" value="1"/>
</dbReference>
<dbReference type="FunFam" id="3.40.50.620:FF:000131">
    <property type="entry name" value="7-cyano-7-deazaguanine synthase"/>
    <property type="match status" value="1"/>
</dbReference>
<dbReference type="Gene3D" id="3.40.50.620">
    <property type="entry name" value="HUPs"/>
    <property type="match status" value="1"/>
</dbReference>
<dbReference type="HAMAP" id="MF_01633">
    <property type="entry name" value="QueC"/>
    <property type="match status" value="1"/>
</dbReference>
<dbReference type="InterPro" id="IPR018317">
    <property type="entry name" value="QueC"/>
</dbReference>
<dbReference type="InterPro" id="IPR014729">
    <property type="entry name" value="Rossmann-like_a/b/a_fold"/>
</dbReference>
<dbReference type="NCBIfam" id="TIGR00364">
    <property type="entry name" value="7-cyano-7-deazaguanine synthase QueC"/>
    <property type="match status" value="1"/>
</dbReference>
<dbReference type="PANTHER" id="PTHR42914">
    <property type="entry name" value="7-CYANO-7-DEAZAGUANINE SYNTHASE"/>
    <property type="match status" value="1"/>
</dbReference>
<dbReference type="PANTHER" id="PTHR42914:SF1">
    <property type="entry name" value="7-CYANO-7-DEAZAGUANINE SYNTHASE"/>
    <property type="match status" value="1"/>
</dbReference>
<dbReference type="Pfam" id="PF06508">
    <property type="entry name" value="QueC"/>
    <property type="match status" value="1"/>
</dbReference>
<dbReference type="PIRSF" id="PIRSF006293">
    <property type="entry name" value="ExsB"/>
    <property type="match status" value="1"/>
</dbReference>
<dbReference type="SUPFAM" id="SSF52402">
    <property type="entry name" value="Adenine nucleotide alpha hydrolases-like"/>
    <property type="match status" value="1"/>
</dbReference>
<proteinExistence type="inferred from homology"/>
<accession>Q21HP4</accession>
<protein>
    <recommendedName>
        <fullName evidence="1">7-cyano-7-deazaguanine synthase</fullName>
        <ecNumber evidence="1">6.3.4.20</ecNumber>
    </recommendedName>
    <alternativeName>
        <fullName evidence="1">7-cyano-7-carbaguanine synthase</fullName>
    </alternativeName>
    <alternativeName>
        <fullName evidence="1">PreQ(0) synthase</fullName>
    </alternativeName>
    <alternativeName>
        <fullName evidence="1">Queuosine biosynthesis protein QueC</fullName>
    </alternativeName>
</protein>